<proteinExistence type="inferred from homology"/>
<evidence type="ECO:0000255" key="1">
    <source>
        <dbReference type="HAMAP-Rule" id="MF_00639"/>
    </source>
</evidence>
<accession>Q5MZA8</accession>
<gene>
    <name evidence="1" type="primary">murD</name>
    <name type="ordered locus">syc2422_c</name>
</gene>
<protein>
    <recommendedName>
        <fullName evidence="1">UDP-N-acetylmuramoylalanine--D-glutamate ligase</fullName>
        <ecNumber evidence="1">6.3.2.9</ecNumber>
    </recommendedName>
    <alternativeName>
        <fullName evidence="1">D-glutamic acid-adding enzyme</fullName>
    </alternativeName>
    <alternativeName>
        <fullName evidence="1">UDP-N-acetylmuramoyl-L-alanyl-D-glutamate synthetase</fullName>
    </alternativeName>
</protein>
<sequence length="463" mass="50225">MQHAHVIGLGKSGCAAALLLRQQGWQVELSDRNAVAAPPELVSQGVQFRLGESLDPVAWGWQTPEQRPNCIVVSPGVPWDLPGLRQAAEELQIETLGELELAWRTLSDIPWVAVTGTNGKTTTTALIAAIFERAGLQAPACGNIGFAACEVARQQQQGEAKPLDWVIAEASSYQIEAAATLAATIGLWTTFTPDHLNRHYTLENYFTIKASLLDRAQQQVLNGDDPYLRNQANATSRWPLAFWTSTQGAEALPTSRDRGFWIEEGWVIDRGDRLFPVERFSMVGNHNQQNLLMAVAAARLAGIEAEAIAEAMANFPGIAHRLERVATWQGIELINDSKATNYDAAWVGLQAVPGPTILIAGGEAKQGDDQAWLDLIQAKARAVLLIGSAAPLFARRLAEVGYSSPVENAETLDRAVPRAVELAQSLDASHVLLSPACASFDQYPNFEARGDHFRRCAQAIAKG</sequence>
<reference key="1">
    <citation type="journal article" date="2007" name="Photosyn. Res.">
        <title>Complete nucleotide sequence of the freshwater unicellular cyanobacterium Synechococcus elongatus PCC 6301 chromosome: gene content and organization.</title>
        <authorList>
            <person name="Sugita C."/>
            <person name="Ogata K."/>
            <person name="Shikata M."/>
            <person name="Jikuya H."/>
            <person name="Takano J."/>
            <person name="Furumichi M."/>
            <person name="Kanehisa M."/>
            <person name="Omata T."/>
            <person name="Sugiura M."/>
            <person name="Sugita M."/>
        </authorList>
    </citation>
    <scope>NUCLEOTIDE SEQUENCE [LARGE SCALE GENOMIC DNA]</scope>
    <source>
        <strain>ATCC 27144 / PCC 6301 / SAUG 1402/1</strain>
    </source>
</reference>
<name>MURD_SYNP6</name>
<organism>
    <name type="scientific">Synechococcus sp. (strain ATCC 27144 / PCC 6301 / SAUG 1402/1)</name>
    <name type="common">Anacystis nidulans</name>
    <dbReference type="NCBI Taxonomy" id="269084"/>
    <lineage>
        <taxon>Bacteria</taxon>
        <taxon>Bacillati</taxon>
        <taxon>Cyanobacteriota</taxon>
        <taxon>Cyanophyceae</taxon>
        <taxon>Synechococcales</taxon>
        <taxon>Synechococcaceae</taxon>
        <taxon>Synechococcus</taxon>
    </lineage>
</organism>
<keyword id="KW-0067">ATP-binding</keyword>
<keyword id="KW-0131">Cell cycle</keyword>
<keyword id="KW-0132">Cell division</keyword>
<keyword id="KW-0133">Cell shape</keyword>
<keyword id="KW-0961">Cell wall biogenesis/degradation</keyword>
<keyword id="KW-0963">Cytoplasm</keyword>
<keyword id="KW-0436">Ligase</keyword>
<keyword id="KW-0547">Nucleotide-binding</keyword>
<keyword id="KW-0573">Peptidoglycan synthesis</keyword>
<comment type="function">
    <text evidence="1">Cell wall formation. Catalyzes the addition of glutamate to the nucleotide precursor UDP-N-acetylmuramoyl-L-alanine (UMA).</text>
</comment>
<comment type="catalytic activity">
    <reaction evidence="1">
        <text>UDP-N-acetyl-alpha-D-muramoyl-L-alanine + D-glutamate + ATP = UDP-N-acetyl-alpha-D-muramoyl-L-alanyl-D-glutamate + ADP + phosphate + H(+)</text>
        <dbReference type="Rhea" id="RHEA:16429"/>
        <dbReference type="ChEBI" id="CHEBI:15378"/>
        <dbReference type="ChEBI" id="CHEBI:29986"/>
        <dbReference type="ChEBI" id="CHEBI:30616"/>
        <dbReference type="ChEBI" id="CHEBI:43474"/>
        <dbReference type="ChEBI" id="CHEBI:83898"/>
        <dbReference type="ChEBI" id="CHEBI:83900"/>
        <dbReference type="ChEBI" id="CHEBI:456216"/>
        <dbReference type="EC" id="6.3.2.9"/>
    </reaction>
</comment>
<comment type="pathway">
    <text evidence="1">Cell wall biogenesis; peptidoglycan biosynthesis.</text>
</comment>
<comment type="subcellular location">
    <subcellularLocation>
        <location evidence="1">Cytoplasm</location>
    </subcellularLocation>
</comment>
<comment type="similarity">
    <text evidence="1">Belongs to the MurCDEF family.</text>
</comment>
<feature type="chain" id="PRO_0000109109" description="UDP-N-acetylmuramoylalanine--D-glutamate ligase">
    <location>
        <begin position="1"/>
        <end position="463"/>
    </location>
</feature>
<feature type="binding site" evidence="1">
    <location>
        <begin position="116"/>
        <end position="122"/>
    </location>
    <ligand>
        <name>ATP</name>
        <dbReference type="ChEBI" id="CHEBI:30616"/>
    </ligand>
</feature>
<dbReference type="EC" id="6.3.2.9" evidence="1"/>
<dbReference type="EMBL" id="AP008231">
    <property type="protein sequence ID" value="BAD80612.1"/>
    <property type="molecule type" value="Genomic_DNA"/>
</dbReference>
<dbReference type="RefSeq" id="WP_011244732.1">
    <property type="nucleotide sequence ID" value="NZ_CP085785.1"/>
</dbReference>
<dbReference type="SMR" id="Q5MZA8"/>
<dbReference type="GeneID" id="72430537"/>
<dbReference type="KEGG" id="syc:syc2422_c"/>
<dbReference type="eggNOG" id="COG0771">
    <property type="taxonomic scope" value="Bacteria"/>
</dbReference>
<dbReference type="UniPathway" id="UPA00219"/>
<dbReference type="Proteomes" id="UP000001175">
    <property type="component" value="Chromosome"/>
</dbReference>
<dbReference type="GO" id="GO:0005737">
    <property type="term" value="C:cytoplasm"/>
    <property type="evidence" value="ECO:0007669"/>
    <property type="project" value="UniProtKB-SubCell"/>
</dbReference>
<dbReference type="GO" id="GO:0005524">
    <property type="term" value="F:ATP binding"/>
    <property type="evidence" value="ECO:0007669"/>
    <property type="project" value="UniProtKB-UniRule"/>
</dbReference>
<dbReference type="GO" id="GO:0008764">
    <property type="term" value="F:UDP-N-acetylmuramoylalanine-D-glutamate ligase activity"/>
    <property type="evidence" value="ECO:0007669"/>
    <property type="project" value="UniProtKB-UniRule"/>
</dbReference>
<dbReference type="GO" id="GO:0051301">
    <property type="term" value="P:cell division"/>
    <property type="evidence" value="ECO:0007669"/>
    <property type="project" value="UniProtKB-KW"/>
</dbReference>
<dbReference type="GO" id="GO:0071555">
    <property type="term" value="P:cell wall organization"/>
    <property type="evidence" value="ECO:0007669"/>
    <property type="project" value="UniProtKB-KW"/>
</dbReference>
<dbReference type="GO" id="GO:0009252">
    <property type="term" value="P:peptidoglycan biosynthetic process"/>
    <property type="evidence" value="ECO:0007669"/>
    <property type="project" value="UniProtKB-UniRule"/>
</dbReference>
<dbReference type="GO" id="GO:0008360">
    <property type="term" value="P:regulation of cell shape"/>
    <property type="evidence" value="ECO:0007669"/>
    <property type="project" value="UniProtKB-KW"/>
</dbReference>
<dbReference type="Gene3D" id="3.90.190.20">
    <property type="entry name" value="Mur ligase, C-terminal domain"/>
    <property type="match status" value="1"/>
</dbReference>
<dbReference type="Gene3D" id="3.40.1190.10">
    <property type="entry name" value="Mur-like, catalytic domain"/>
    <property type="match status" value="1"/>
</dbReference>
<dbReference type="Gene3D" id="3.40.50.720">
    <property type="entry name" value="NAD(P)-binding Rossmann-like Domain"/>
    <property type="match status" value="1"/>
</dbReference>
<dbReference type="HAMAP" id="MF_00639">
    <property type="entry name" value="MurD"/>
    <property type="match status" value="1"/>
</dbReference>
<dbReference type="InterPro" id="IPR036565">
    <property type="entry name" value="Mur-like_cat_sf"/>
</dbReference>
<dbReference type="InterPro" id="IPR004101">
    <property type="entry name" value="Mur_ligase_C"/>
</dbReference>
<dbReference type="InterPro" id="IPR036615">
    <property type="entry name" value="Mur_ligase_C_dom_sf"/>
</dbReference>
<dbReference type="InterPro" id="IPR013221">
    <property type="entry name" value="Mur_ligase_cen"/>
</dbReference>
<dbReference type="InterPro" id="IPR005762">
    <property type="entry name" value="MurD"/>
</dbReference>
<dbReference type="NCBIfam" id="TIGR01087">
    <property type="entry name" value="murD"/>
    <property type="match status" value="1"/>
</dbReference>
<dbReference type="PANTHER" id="PTHR43692">
    <property type="entry name" value="UDP-N-ACETYLMURAMOYLALANINE--D-GLUTAMATE LIGASE"/>
    <property type="match status" value="1"/>
</dbReference>
<dbReference type="PANTHER" id="PTHR43692:SF1">
    <property type="entry name" value="UDP-N-ACETYLMURAMOYLALANINE--D-GLUTAMATE LIGASE"/>
    <property type="match status" value="1"/>
</dbReference>
<dbReference type="Pfam" id="PF02875">
    <property type="entry name" value="Mur_ligase_C"/>
    <property type="match status" value="1"/>
</dbReference>
<dbReference type="Pfam" id="PF08245">
    <property type="entry name" value="Mur_ligase_M"/>
    <property type="match status" value="1"/>
</dbReference>
<dbReference type="Pfam" id="PF21799">
    <property type="entry name" value="MurD-like_N"/>
    <property type="match status" value="1"/>
</dbReference>
<dbReference type="SUPFAM" id="SSF51984">
    <property type="entry name" value="MurCD N-terminal domain"/>
    <property type="match status" value="1"/>
</dbReference>
<dbReference type="SUPFAM" id="SSF53623">
    <property type="entry name" value="MurD-like peptide ligases, catalytic domain"/>
    <property type="match status" value="1"/>
</dbReference>
<dbReference type="SUPFAM" id="SSF53244">
    <property type="entry name" value="MurD-like peptide ligases, peptide-binding domain"/>
    <property type="match status" value="1"/>
</dbReference>